<proteinExistence type="inferred from homology"/>
<keyword id="KW-0963">Cytoplasm</keyword>
<keyword id="KW-0489">Methyltransferase</keyword>
<keyword id="KW-1185">Reference proteome</keyword>
<keyword id="KW-0698">rRNA processing</keyword>
<keyword id="KW-0949">S-adenosyl-L-methionine</keyword>
<keyword id="KW-0808">Transferase</keyword>
<reference key="1">
    <citation type="journal article" date="2007" name="Nat. Biotechnol.">
        <title>Complete genome sequence of the fish pathogen Flavobacterium psychrophilum.</title>
        <authorList>
            <person name="Duchaud E."/>
            <person name="Boussaha M."/>
            <person name="Loux V."/>
            <person name="Bernardet J.-F."/>
            <person name="Michel C."/>
            <person name="Kerouault B."/>
            <person name="Mondot S."/>
            <person name="Nicolas P."/>
            <person name="Bossy R."/>
            <person name="Caron C."/>
            <person name="Bessieres P."/>
            <person name="Gibrat J.-F."/>
            <person name="Claverol S."/>
            <person name="Dumetz F."/>
            <person name="Le Henaff M."/>
            <person name="Benmansour A."/>
        </authorList>
    </citation>
    <scope>NUCLEOTIDE SEQUENCE [LARGE SCALE GENOMIC DNA]</scope>
    <source>
        <strain>ATCC 49511 / DSM 21280 / CIP 103535 / JIP02/86</strain>
    </source>
</reference>
<evidence type="ECO:0000255" key="1">
    <source>
        <dbReference type="HAMAP-Rule" id="MF_01848"/>
    </source>
</evidence>
<sequence>MKAKIVPEKTNLHPRNLHKFGYDFEALTTCSSELKNHVFTNEYDTQTINFSNPEAVKALNNALLIAYYNIKNWGIPQDYLCPPIPGRADYLHYIADLLATTNNQIIPEGENVIGLDIGIGANCIYPIIGNAIYDWSFVGTDIDEKAIQNCKKIIENNPKLIDAISLQQQVESRFIFKNIILTDDKFAFTICNPPFHNSAAEATKSSARKVNNLQEIRTKNPVLNFGGQNTELWCDGGEIGFITQMIYESAKYPMQVLWFTTLVSKRENLSSIYKTLNKVSAVEIKTIDMAQGQKNSRIVAWTFLSELQQKAWRF</sequence>
<comment type="function">
    <text evidence="1">Specifically methylates the adenine in position 1618 of 23S rRNA.</text>
</comment>
<comment type="catalytic activity">
    <reaction evidence="1">
        <text>adenosine(1618) in 23S rRNA + S-adenosyl-L-methionine = N(6)-methyladenosine(1618) in 23S rRNA + S-adenosyl-L-homocysteine + H(+)</text>
        <dbReference type="Rhea" id="RHEA:16497"/>
        <dbReference type="Rhea" id="RHEA-COMP:10229"/>
        <dbReference type="Rhea" id="RHEA-COMP:10231"/>
        <dbReference type="ChEBI" id="CHEBI:15378"/>
        <dbReference type="ChEBI" id="CHEBI:57856"/>
        <dbReference type="ChEBI" id="CHEBI:59789"/>
        <dbReference type="ChEBI" id="CHEBI:74411"/>
        <dbReference type="ChEBI" id="CHEBI:74449"/>
        <dbReference type="EC" id="2.1.1.181"/>
    </reaction>
</comment>
<comment type="subcellular location">
    <subcellularLocation>
        <location evidence="1">Cytoplasm</location>
    </subcellularLocation>
</comment>
<comment type="similarity">
    <text evidence="1">Belongs to the methyltransferase superfamily. METTL16/RlmF family.</text>
</comment>
<accession>A6H0G2</accession>
<organism>
    <name type="scientific">Flavobacterium psychrophilum (strain ATCC 49511 / DSM 21280 / CIP 103535 / JIP02/86)</name>
    <dbReference type="NCBI Taxonomy" id="402612"/>
    <lineage>
        <taxon>Bacteria</taxon>
        <taxon>Pseudomonadati</taxon>
        <taxon>Bacteroidota</taxon>
        <taxon>Flavobacteriia</taxon>
        <taxon>Flavobacteriales</taxon>
        <taxon>Flavobacteriaceae</taxon>
        <taxon>Flavobacterium</taxon>
    </lineage>
</organism>
<gene>
    <name evidence="1" type="primary">rlmF</name>
    <name type="ordered locus">FP1768</name>
</gene>
<name>RLMF_FLAPJ</name>
<dbReference type="EC" id="2.1.1.181" evidence="1"/>
<dbReference type="EMBL" id="AM398681">
    <property type="protein sequence ID" value="CAL43835.1"/>
    <property type="molecule type" value="Genomic_DNA"/>
</dbReference>
<dbReference type="RefSeq" id="WP_011963878.1">
    <property type="nucleotide sequence ID" value="NC_009613.3"/>
</dbReference>
<dbReference type="RefSeq" id="YP_001296642.1">
    <property type="nucleotide sequence ID" value="NC_009613.3"/>
</dbReference>
<dbReference type="SMR" id="A6H0G2"/>
<dbReference type="STRING" id="402612.FP1768"/>
<dbReference type="EnsemblBacteria" id="CAL43835">
    <property type="protein sequence ID" value="CAL43835"/>
    <property type="gene ID" value="FP1768"/>
</dbReference>
<dbReference type="GeneID" id="66552046"/>
<dbReference type="KEGG" id="fps:FP1768"/>
<dbReference type="PATRIC" id="fig|402612.5.peg.1787"/>
<dbReference type="eggNOG" id="COG3129">
    <property type="taxonomic scope" value="Bacteria"/>
</dbReference>
<dbReference type="HOGENOM" id="CLU_027534_3_0_10"/>
<dbReference type="OrthoDB" id="1115728at2"/>
<dbReference type="Proteomes" id="UP000006394">
    <property type="component" value="Chromosome"/>
</dbReference>
<dbReference type="GO" id="GO:0005737">
    <property type="term" value="C:cytoplasm"/>
    <property type="evidence" value="ECO:0007669"/>
    <property type="project" value="UniProtKB-SubCell"/>
</dbReference>
<dbReference type="GO" id="GO:0052907">
    <property type="term" value="F:23S rRNA (adenine(1618)-N(6))-methyltransferase activity"/>
    <property type="evidence" value="ECO:0007669"/>
    <property type="project" value="UniProtKB-EC"/>
</dbReference>
<dbReference type="GO" id="GO:0070475">
    <property type="term" value="P:rRNA base methylation"/>
    <property type="evidence" value="ECO:0007669"/>
    <property type="project" value="TreeGrafter"/>
</dbReference>
<dbReference type="Gene3D" id="3.40.50.150">
    <property type="entry name" value="Vaccinia Virus protein VP39"/>
    <property type="match status" value="1"/>
</dbReference>
<dbReference type="HAMAP" id="MF_01848">
    <property type="entry name" value="23SrRNA_methyltr_F"/>
    <property type="match status" value="1"/>
</dbReference>
<dbReference type="InterPro" id="IPR010286">
    <property type="entry name" value="METTL16/RlmF"/>
</dbReference>
<dbReference type="InterPro" id="IPR016909">
    <property type="entry name" value="rRNA_lsu_MeTfrase_F"/>
</dbReference>
<dbReference type="InterPro" id="IPR029063">
    <property type="entry name" value="SAM-dependent_MTases_sf"/>
</dbReference>
<dbReference type="NCBIfam" id="NF008725">
    <property type="entry name" value="PRK11727.1"/>
    <property type="match status" value="1"/>
</dbReference>
<dbReference type="PANTHER" id="PTHR13393:SF0">
    <property type="entry name" value="RNA N6-ADENOSINE-METHYLTRANSFERASE METTL16"/>
    <property type="match status" value="1"/>
</dbReference>
<dbReference type="PANTHER" id="PTHR13393">
    <property type="entry name" value="SAM-DEPENDENT METHYLTRANSFERASE"/>
    <property type="match status" value="1"/>
</dbReference>
<dbReference type="Pfam" id="PF05971">
    <property type="entry name" value="Methyltransf_10"/>
    <property type="match status" value="1"/>
</dbReference>
<dbReference type="PIRSF" id="PIRSF029038">
    <property type="entry name" value="Mtase_YbiN_prd"/>
    <property type="match status" value="1"/>
</dbReference>
<dbReference type="SUPFAM" id="SSF53335">
    <property type="entry name" value="S-adenosyl-L-methionine-dependent methyltransferases"/>
    <property type="match status" value="1"/>
</dbReference>
<feature type="chain" id="PRO_0000349917" description="Ribosomal RNA large subunit methyltransferase F">
    <location>
        <begin position="1"/>
        <end position="314"/>
    </location>
</feature>
<protein>
    <recommendedName>
        <fullName evidence="1">Ribosomal RNA large subunit methyltransferase F</fullName>
        <ecNumber evidence="1">2.1.1.181</ecNumber>
    </recommendedName>
    <alternativeName>
        <fullName evidence="1">23S rRNA mA1618 methyltransferase</fullName>
    </alternativeName>
    <alternativeName>
        <fullName evidence="1">rRNA adenine N-6-methyltransferase</fullName>
    </alternativeName>
</protein>